<feature type="chain" id="PRO_0000342334" description="Kinesin-like protein KIN-UB">
    <location>
        <begin position="1"/>
        <end position="891"/>
    </location>
</feature>
<feature type="domain" description="Kinesin motor" evidence="3">
    <location>
        <begin position="54"/>
        <end position="400"/>
    </location>
</feature>
<feature type="repeat" description="ARM 1">
    <location>
        <begin position="623"/>
        <end position="662"/>
    </location>
</feature>
<feature type="repeat" description="ARM 2">
    <location>
        <begin position="664"/>
        <end position="704"/>
    </location>
</feature>
<feature type="repeat" description="ARM 3">
    <location>
        <begin position="706"/>
        <end position="746"/>
    </location>
</feature>
<feature type="repeat" description="ARM 4">
    <location>
        <begin position="748"/>
        <end position="787"/>
    </location>
</feature>
<feature type="region of interest" description="Disordered" evidence="4">
    <location>
        <begin position="1"/>
        <end position="54"/>
    </location>
</feature>
<feature type="region of interest" description="Disordered" evidence="4">
    <location>
        <begin position="586"/>
        <end position="626"/>
    </location>
</feature>
<feature type="coiled-coil region" evidence="2">
    <location>
        <begin position="502"/>
        <end position="592"/>
    </location>
</feature>
<feature type="short sequence motif" description="D-BOX" evidence="1">
    <location>
        <begin position="370"/>
        <end position="378"/>
    </location>
</feature>
<feature type="compositionally biased region" description="Low complexity" evidence="4">
    <location>
        <begin position="45"/>
        <end position="54"/>
    </location>
</feature>
<feature type="compositionally biased region" description="Basic and acidic residues" evidence="4">
    <location>
        <begin position="586"/>
        <end position="595"/>
    </location>
</feature>
<feature type="compositionally biased region" description="Polar residues" evidence="4">
    <location>
        <begin position="607"/>
        <end position="621"/>
    </location>
</feature>
<feature type="binding site" evidence="3">
    <location>
        <begin position="139"/>
        <end position="146"/>
    </location>
    <ligand>
        <name>ATP</name>
        <dbReference type="ChEBI" id="CHEBI:30616"/>
    </ligand>
</feature>
<name>KINUB_ORYSJ</name>
<sequence length="891" mass="97845">MSGKVANATPKAAAGKPRLSAAGGGAYRRTSSGPLPSAGGGGGRASSESGVSSRVRVAVRLRPRNADELAADADFGDCVELQPELKRLKLRKNNWESETYEFDEVLTEFASQKRVYEVVAKPVVESVLEGYNGTVMAYGQTGTGKTFTLGRLGEEDTAARGIMVRAMEDILADITPETDTVSVSYLQLYMEMIQDLLDPVNDNIAIVEDPRTGDVSLPGATVVEVRDQKSFVDLLRIGEAHRVAANTKLNTESSRSHALLMVNVRRAVKGKHEMDVSISGENGHSSSMVGSLRPPIVRKSKLVVVDLAGSERIDKSGSEGHTLEEAKSINLSLSALGKCINALAENSPHVPVRDSKLTRLLKDSFGGTARTSLVVTIGPSPRHRGETTSTIMFGQRAMKVENMVKLKEEFDYKSLCRRLDIELDKLIAENERQRKYFDDEIERITAEAQLRVTEAEREYKISLENEKAKYHQEYLDSIKILEEKWKIHQQSPKKLIKETEPTSSEVGEVQNLLQNEKVLRQSAEDEANDLKNQVLHWKKMEAAATAEVVKLRKMLDTEASQKEKLDEEIAVLKSQLLQLSLDADETRRSLDRGDGSGKIFPGFDSLMSHSRNSQPREQSNGPKPPIAKLFEQVGLQKILSLLESEEPDVRVHAVKVVANLAAEEANQEKIVEAGGLTSLLMLLRSSEDETIRRVAAGAIANLAMNETNQDLIMAQGGVSLLSMTASDAEDPQTLRMVAGAIANLCGNDKLQTRLRGEGGIKALLGMVKCGHPDVLAQVARGIANFAKCESRAATQGNKVGKSLLIDDGALPWIVKNANNEAAPIRRHIELALCHLAQHEVNSKDIISEGALWELVRISRDCSREDIRMLAYRTLTSSPTLQSEMRRLRIEC</sequence>
<reference key="1">
    <citation type="journal article" date="2005" name="Nature">
        <title>The map-based sequence of the rice genome.</title>
        <authorList>
            <consortium name="International rice genome sequencing project (IRGSP)"/>
        </authorList>
    </citation>
    <scope>NUCLEOTIDE SEQUENCE [LARGE SCALE GENOMIC DNA]</scope>
    <source>
        <strain>cv. Nipponbare</strain>
    </source>
</reference>
<reference key="2">
    <citation type="journal article" date="2008" name="Nucleic Acids Res.">
        <title>The rice annotation project database (RAP-DB): 2008 update.</title>
        <authorList>
            <consortium name="The rice annotation project (RAP)"/>
        </authorList>
    </citation>
    <scope>GENOME REANNOTATION</scope>
    <source>
        <strain>cv. Nipponbare</strain>
    </source>
</reference>
<reference key="3">
    <citation type="journal article" date="2013" name="Rice">
        <title>Improvement of the Oryza sativa Nipponbare reference genome using next generation sequence and optical map data.</title>
        <authorList>
            <person name="Kawahara Y."/>
            <person name="de la Bastide M."/>
            <person name="Hamilton J.P."/>
            <person name="Kanamori H."/>
            <person name="McCombie W.R."/>
            <person name="Ouyang S."/>
            <person name="Schwartz D.C."/>
            <person name="Tanaka T."/>
            <person name="Wu J."/>
            <person name="Zhou S."/>
            <person name="Childs K.L."/>
            <person name="Davidson R.M."/>
            <person name="Lin H."/>
            <person name="Quesada-Ocampo L."/>
            <person name="Vaillancourt B."/>
            <person name="Sakai H."/>
            <person name="Lee S.S."/>
            <person name="Kim J."/>
            <person name="Numa H."/>
            <person name="Itoh T."/>
            <person name="Buell C.R."/>
            <person name="Matsumoto T."/>
        </authorList>
    </citation>
    <scope>GENOME REANNOTATION</scope>
    <source>
        <strain>cv. Nipponbare</strain>
    </source>
</reference>
<reference key="4">
    <citation type="submission" date="2006-10" db="EMBL/GenBank/DDBJ databases">
        <title>Oryza sativa full length cDNA.</title>
        <authorList>
            <consortium name="The rice full-length cDNA consortium"/>
        </authorList>
    </citation>
    <scope>NUCLEOTIDE SEQUENCE [LARGE SCALE MRNA] OF 606-891</scope>
    <source>
        <strain>cv. Nipponbare</strain>
    </source>
</reference>
<reference key="5">
    <citation type="journal article" date="2009" name="Ann. Bot.">
        <title>Evaluating the microtubule cytoskeleton and its interacting proteins in monocots by mining the rice genome.</title>
        <authorList>
            <person name="Guo L."/>
            <person name="Ho C.M."/>
            <person name="Kong Z."/>
            <person name="Lee Y.R."/>
            <person name="Qian Q."/>
            <person name="Liu B."/>
        </authorList>
    </citation>
    <scope>GENE FAMILY</scope>
    <scope>NOMENCLATURE</scope>
</reference>
<keyword id="KW-0067">ATP-binding</keyword>
<keyword id="KW-0175">Coiled coil</keyword>
<keyword id="KW-0963">Cytoplasm</keyword>
<keyword id="KW-0206">Cytoskeleton</keyword>
<keyword id="KW-0493">Microtubule</keyword>
<keyword id="KW-0505">Motor protein</keyword>
<keyword id="KW-0547">Nucleotide-binding</keyword>
<keyword id="KW-1185">Reference proteome</keyword>
<keyword id="KW-0677">Repeat</keyword>
<accession>Q5VQ09</accession>
<accession>A0A0N7KLH6</accession>
<comment type="subcellular location">
    <subcellularLocation>
        <location evidence="6">Cytoplasm</location>
        <location evidence="6">Cytoskeleton</location>
    </subcellularLocation>
</comment>
<comment type="domain">
    <text evidence="1">D-BOX motif functions as a recognition motif for the ubiquitination machinery.</text>
</comment>
<comment type="similarity">
    <text evidence="5">Belongs to the TRAFAC class myosin-kinesin ATPase superfamily. Kinesin family. Ungrouped subfamily.</text>
</comment>
<comment type="sequence caution" evidence="6">
    <conflict type="erroneous gene model prediction">
        <sequence resource="EMBL-CDS" id="BAS96041"/>
    </conflict>
</comment>
<dbReference type="EMBL" id="AP003526">
    <property type="protein sequence ID" value="BAD68466.1"/>
    <property type="molecule type" value="Genomic_DNA"/>
</dbReference>
<dbReference type="EMBL" id="AP008212">
    <property type="protein sequence ID" value="BAF18645.1"/>
    <property type="molecule type" value="Genomic_DNA"/>
</dbReference>
<dbReference type="EMBL" id="AP014962">
    <property type="protein sequence ID" value="BAS96041.1"/>
    <property type="status" value="ALT_SEQ"/>
    <property type="molecule type" value="Genomic_DNA"/>
</dbReference>
<dbReference type="EMBL" id="AK242714">
    <property type="status" value="NOT_ANNOTATED_CDS"/>
    <property type="molecule type" value="mRNA"/>
</dbReference>
<dbReference type="SMR" id="Q5VQ09"/>
<dbReference type="FunCoup" id="Q5VQ09">
    <property type="interactions" value="251"/>
</dbReference>
<dbReference type="STRING" id="39947.Q5VQ09"/>
<dbReference type="PaxDb" id="39947-Q5VQ09"/>
<dbReference type="eggNOG" id="KOG0240">
    <property type="taxonomic scope" value="Eukaryota"/>
</dbReference>
<dbReference type="HOGENOM" id="CLU_069940_0_0_1"/>
<dbReference type="InParanoid" id="Q5VQ09"/>
<dbReference type="Proteomes" id="UP000000763">
    <property type="component" value="Chromosome 6"/>
</dbReference>
<dbReference type="Proteomes" id="UP000059680">
    <property type="component" value="Chromosome 6"/>
</dbReference>
<dbReference type="GO" id="GO:0005737">
    <property type="term" value="C:cytoplasm"/>
    <property type="evidence" value="ECO:0000318"/>
    <property type="project" value="GO_Central"/>
</dbReference>
<dbReference type="GO" id="GO:0005871">
    <property type="term" value="C:kinesin complex"/>
    <property type="evidence" value="ECO:0000318"/>
    <property type="project" value="GO_Central"/>
</dbReference>
<dbReference type="GO" id="GO:0005874">
    <property type="term" value="C:microtubule"/>
    <property type="evidence" value="ECO:0000318"/>
    <property type="project" value="GO_Central"/>
</dbReference>
<dbReference type="GO" id="GO:0005524">
    <property type="term" value="F:ATP binding"/>
    <property type="evidence" value="ECO:0007669"/>
    <property type="project" value="UniProtKB-KW"/>
</dbReference>
<dbReference type="GO" id="GO:0016887">
    <property type="term" value="F:ATP hydrolysis activity"/>
    <property type="evidence" value="ECO:0000318"/>
    <property type="project" value="GO_Central"/>
</dbReference>
<dbReference type="GO" id="GO:0008017">
    <property type="term" value="F:microtubule binding"/>
    <property type="evidence" value="ECO:0000318"/>
    <property type="project" value="GO_Central"/>
</dbReference>
<dbReference type="GO" id="GO:0008574">
    <property type="term" value="F:plus-end-directed microtubule motor activity"/>
    <property type="evidence" value="ECO:0000318"/>
    <property type="project" value="GO_Central"/>
</dbReference>
<dbReference type="GO" id="GO:0030705">
    <property type="term" value="P:cytoskeleton-dependent intracellular transport"/>
    <property type="evidence" value="ECO:0000318"/>
    <property type="project" value="GO_Central"/>
</dbReference>
<dbReference type="GO" id="GO:0007018">
    <property type="term" value="P:microtubule-based movement"/>
    <property type="evidence" value="ECO:0000318"/>
    <property type="project" value="GO_Central"/>
</dbReference>
<dbReference type="CDD" id="cd00106">
    <property type="entry name" value="KISc"/>
    <property type="match status" value="1"/>
</dbReference>
<dbReference type="FunFam" id="3.40.850.10:FF:000036">
    <property type="entry name" value="Kinesin-like protein"/>
    <property type="match status" value="1"/>
</dbReference>
<dbReference type="Gene3D" id="3.40.850.10">
    <property type="entry name" value="Kinesin motor domain"/>
    <property type="match status" value="1"/>
</dbReference>
<dbReference type="Gene3D" id="1.25.10.10">
    <property type="entry name" value="Leucine-rich Repeat Variant"/>
    <property type="match status" value="1"/>
</dbReference>
<dbReference type="InterPro" id="IPR011989">
    <property type="entry name" value="ARM-like"/>
</dbReference>
<dbReference type="InterPro" id="IPR016024">
    <property type="entry name" value="ARM-type_fold"/>
</dbReference>
<dbReference type="InterPro" id="IPR000225">
    <property type="entry name" value="Armadillo"/>
</dbReference>
<dbReference type="InterPro" id="IPR047149">
    <property type="entry name" value="KIF11-like"/>
</dbReference>
<dbReference type="InterPro" id="IPR019821">
    <property type="entry name" value="Kinesin_motor_CS"/>
</dbReference>
<dbReference type="InterPro" id="IPR001752">
    <property type="entry name" value="Kinesin_motor_dom"/>
</dbReference>
<dbReference type="InterPro" id="IPR036961">
    <property type="entry name" value="Kinesin_motor_dom_sf"/>
</dbReference>
<dbReference type="InterPro" id="IPR027417">
    <property type="entry name" value="P-loop_NTPase"/>
</dbReference>
<dbReference type="PANTHER" id="PTHR47970:SF30">
    <property type="entry name" value="KINESIN-LIKE PROTEIN"/>
    <property type="match status" value="1"/>
</dbReference>
<dbReference type="PANTHER" id="PTHR47970">
    <property type="entry name" value="KINESIN-LIKE PROTEIN KIF11"/>
    <property type="match status" value="1"/>
</dbReference>
<dbReference type="Pfam" id="PF00514">
    <property type="entry name" value="Arm"/>
    <property type="match status" value="1"/>
</dbReference>
<dbReference type="Pfam" id="PF00225">
    <property type="entry name" value="Kinesin"/>
    <property type="match status" value="1"/>
</dbReference>
<dbReference type="PRINTS" id="PR00380">
    <property type="entry name" value="KINESINHEAVY"/>
</dbReference>
<dbReference type="SMART" id="SM00185">
    <property type="entry name" value="ARM"/>
    <property type="match status" value="4"/>
</dbReference>
<dbReference type="SMART" id="SM00129">
    <property type="entry name" value="KISc"/>
    <property type="match status" value="1"/>
</dbReference>
<dbReference type="SUPFAM" id="SSF48371">
    <property type="entry name" value="ARM repeat"/>
    <property type="match status" value="1"/>
</dbReference>
<dbReference type="SUPFAM" id="SSF52540">
    <property type="entry name" value="P-loop containing nucleoside triphosphate hydrolases"/>
    <property type="match status" value="1"/>
</dbReference>
<dbReference type="PROSITE" id="PS50176">
    <property type="entry name" value="ARM_REPEAT"/>
    <property type="match status" value="2"/>
</dbReference>
<dbReference type="PROSITE" id="PS00411">
    <property type="entry name" value="KINESIN_MOTOR_1"/>
    <property type="match status" value="1"/>
</dbReference>
<dbReference type="PROSITE" id="PS50067">
    <property type="entry name" value="KINESIN_MOTOR_2"/>
    <property type="match status" value="1"/>
</dbReference>
<protein>
    <recommendedName>
        <fullName evidence="6">Kinesin-like protein KIN-UB</fullName>
    </recommendedName>
    <alternativeName>
        <fullName evidence="6">Protein ARMADILLO REPEAT KINESIN2</fullName>
    </alternativeName>
</protein>
<organism>
    <name type="scientific">Oryza sativa subsp. japonica</name>
    <name type="common">Rice</name>
    <dbReference type="NCBI Taxonomy" id="39947"/>
    <lineage>
        <taxon>Eukaryota</taxon>
        <taxon>Viridiplantae</taxon>
        <taxon>Streptophyta</taxon>
        <taxon>Embryophyta</taxon>
        <taxon>Tracheophyta</taxon>
        <taxon>Spermatophyta</taxon>
        <taxon>Magnoliopsida</taxon>
        <taxon>Liliopsida</taxon>
        <taxon>Poales</taxon>
        <taxon>Poaceae</taxon>
        <taxon>BOP clade</taxon>
        <taxon>Oryzoideae</taxon>
        <taxon>Oryzeae</taxon>
        <taxon>Oryzinae</taxon>
        <taxon>Oryza</taxon>
        <taxon>Oryza sativa</taxon>
    </lineage>
</organism>
<proteinExistence type="evidence at transcript level"/>
<evidence type="ECO:0000250" key="1">
    <source>
        <dbReference type="UniProtKB" id="Q9FZ06"/>
    </source>
</evidence>
<evidence type="ECO:0000255" key="2"/>
<evidence type="ECO:0000255" key="3">
    <source>
        <dbReference type="PROSITE-ProRule" id="PRU00283"/>
    </source>
</evidence>
<evidence type="ECO:0000256" key="4">
    <source>
        <dbReference type="SAM" id="MobiDB-lite"/>
    </source>
</evidence>
<evidence type="ECO:0000303" key="5">
    <source>
    </source>
</evidence>
<evidence type="ECO:0000305" key="6"/>
<evidence type="ECO:0000312" key="7">
    <source>
        <dbReference type="EMBL" id="BAD68466.1"/>
    </source>
</evidence>
<evidence type="ECO:0000312" key="8">
    <source>
        <dbReference type="EMBL" id="BAS96041.1"/>
    </source>
</evidence>
<gene>
    <name evidence="6" type="primary">KINUB</name>
    <name evidence="8" type="ordered locus">Os06g0137100</name>
    <name evidence="6" type="ordered locus">LOC_Os06g04560</name>
    <name evidence="7" type="ORF">P0548D03.30</name>
</gene>